<sequence>MDKSKRSFLKSKRSVRRRLPPIQSGDLIDYRNMSLISRFISEQGKILSRRVNRLTLKQQRLITVAIKQARILSLLPFLNNEKQFERTESTARTTGLRTRNK</sequence>
<comment type="subunit">
    <text>Part of the 30S ribosomal subunit.</text>
</comment>
<comment type="subcellular location">
    <subcellularLocation>
        <location>Plastid</location>
        <location>Chloroplast</location>
    </subcellularLocation>
</comment>
<comment type="similarity">
    <text evidence="1">Belongs to the bacterial ribosomal protein bS18 family.</text>
</comment>
<reference key="1">
    <citation type="journal article" date="2007" name="Plant Biotechnol. J.">
        <title>The complete nucleotide sequence of the coffee (Coffea arabica L.) chloroplast genome: organization and implications for biotechnology and phylogenetic relationships amongst angiosperms.</title>
        <authorList>
            <person name="Samson N."/>
            <person name="Bausher M.G."/>
            <person name="Lee S.-B."/>
            <person name="Jansen R.K."/>
            <person name="Daniell H."/>
        </authorList>
    </citation>
    <scope>NUCLEOTIDE SEQUENCE [LARGE SCALE GENOMIC DNA]</scope>
</reference>
<geneLocation type="chloroplast"/>
<gene>
    <name evidence="1" type="primary">rps18</name>
</gene>
<dbReference type="EMBL" id="EF044213">
    <property type="protein sequence ID" value="ABJ89701.1"/>
    <property type="molecule type" value="Genomic_DNA"/>
</dbReference>
<dbReference type="RefSeq" id="YP_817504.1">
    <property type="nucleotide sequence ID" value="NC_008535.1"/>
</dbReference>
<dbReference type="SMR" id="A0A357"/>
<dbReference type="GeneID" id="4421751"/>
<dbReference type="OrthoDB" id="21463at2759"/>
<dbReference type="Proteomes" id="UP000515148">
    <property type="component" value="Chloroplast Pltd"/>
</dbReference>
<dbReference type="GO" id="GO:0009507">
    <property type="term" value="C:chloroplast"/>
    <property type="evidence" value="ECO:0007669"/>
    <property type="project" value="UniProtKB-SubCell"/>
</dbReference>
<dbReference type="GO" id="GO:0005763">
    <property type="term" value="C:mitochondrial small ribosomal subunit"/>
    <property type="evidence" value="ECO:0007669"/>
    <property type="project" value="TreeGrafter"/>
</dbReference>
<dbReference type="GO" id="GO:0070181">
    <property type="term" value="F:small ribosomal subunit rRNA binding"/>
    <property type="evidence" value="ECO:0007669"/>
    <property type="project" value="TreeGrafter"/>
</dbReference>
<dbReference type="GO" id="GO:0003735">
    <property type="term" value="F:structural constituent of ribosome"/>
    <property type="evidence" value="ECO:0007669"/>
    <property type="project" value="InterPro"/>
</dbReference>
<dbReference type="GO" id="GO:0006412">
    <property type="term" value="P:translation"/>
    <property type="evidence" value="ECO:0007669"/>
    <property type="project" value="UniProtKB-UniRule"/>
</dbReference>
<dbReference type="FunFam" id="4.10.640.10:FF:000002">
    <property type="entry name" value="30S ribosomal protein S18, chloroplastic"/>
    <property type="match status" value="1"/>
</dbReference>
<dbReference type="Gene3D" id="4.10.640.10">
    <property type="entry name" value="Ribosomal protein S18"/>
    <property type="match status" value="1"/>
</dbReference>
<dbReference type="HAMAP" id="MF_00270">
    <property type="entry name" value="Ribosomal_bS18"/>
    <property type="match status" value="1"/>
</dbReference>
<dbReference type="InterPro" id="IPR001648">
    <property type="entry name" value="Ribosomal_bS18"/>
</dbReference>
<dbReference type="InterPro" id="IPR018275">
    <property type="entry name" value="Ribosomal_bS18_CS"/>
</dbReference>
<dbReference type="InterPro" id="IPR036870">
    <property type="entry name" value="Ribosomal_bS18_sf"/>
</dbReference>
<dbReference type="NCBIfam" id="TIGR00165">
    <property type="entry name" value="S18"/>
    <property type="match status" value="1"/>
</dbReference>
<dbReference type="PANTHER" id="PTHR13479">
    <property type="entry name" value="30S RIBOSOMAL PROTEIN S18"/>
    <property type="match status" value="1"/>
</dbReference>
<dbReference type="PANTHER" id="PTHR13479:SF40">
    <property type="entry name" value="SMALL RIBOSOMAL SUBUNIT PROTEIN BS18M"/>
    <property type="match status" value="1"/>
</dbReference>
<dbReference type="Pfam" id="PF01084">
    <property type="entry name" value="Ribosomal_S18"/>
    <property type="match status" value="1"/>
</dbReference>
<dbReference type="PRINTS" id="PR00974">
    <property type="entry name" value="RIBOSOMALS18"/>
</dbReference>
<dbReference type="SUPFAM" id="SSF46911">
    <property type="entry name" value="Ribosomal protein S18"/>
    <property type="match status" value="1"/>
</dbReference>
<dbReference type="PROSITE" id="PS00057">
    <property type="entry name" value="RIBOSOMAL_S18"/>
    <property type="match status" value="1"/>
</dbReference>
<protein>
    <recommendedName>
        <fullName evidence="1">Small ribosomal subunit protein bS18c</fullName>
    </recommendedName>
    <alternativeName>
        <fullName evidence="2">30S ribosomal protein S18, chloroplastic</fullName>
    </alternativeName>
</protein>
<name>RR18_COFAR</name>
<evidence type="ECO:0000255" key="1">
    <source>
        <dbReference type="HAMAP-Rule" id="MF_00270"/>
    </source>
</evidence>
<evidence type="ECO:0000305" key="2"/>
<proteinExistence type="inferred from homology"/>
<accession>A0A357</accession>
<keyword id="KW-0150">Chloroplast</keyword>
<keyword id="KW-0934">Plastid</keyword>
<keyword id="KW-1185">Reference proteome</keyword>
<keyword id="KW-0687">Ribonucleoprotein</keyword>
<keyword id="KW-0689">Ribosomal protein</keyword>
<keyword id="KW-0694">RNA-binding</keyword>
<keyword id="KW-0699">rRNA-binding</keyword>
<organism>
    <name type="scientific">Coffea arabica</name>
    <name type="common">Arabian coffee</name>
    <dbReference type="NCBI Taxonomy" id="13443"/>
    <lineage>
        <taxon>Eukaryota</taxon>
        <taxon>Viridiplantae</taxon>
        <taxon>Streptophyta</taxon>
        <taxon>Embryophyta</taxon>
        <taxon>Tracheophyta</taxon>
        <taxon>Spermatophyta</taxon>
        <taxon>Magnoliopsida</taxon>
        <taxon>eudicotyledons</taxon>
        <taxon>Gunneridae</taxon>
        <taxon>Pentapetalae</taxon>
        <taxon>asterids</taxon>
        <taxon>lamiids</taxon>
        <taxon>Gentianales</taxon>
        <taxon>Rubiaceae</taxon>
        <taxon>Ixoroideae</taxon>
        <taxon>Gardenieae complex</taxon>
        <taxon>Bertiereae - Coffeeae clade</taxon>
        <taxon>Coffeeae</taxon>
        <taxon>Coffea</taxon>
    </lineage>
</organism>
<feature type="chain" id="PRO_0000276864" description="Small ribosomal subunit protein bS18c">
    <location>
        <begin position="1"/>
        <end position="101"/>
    </location>
</feature>